<proteinExistence type="evidence at protein level"/>
<keyword id="KW-0025">Alternative splicing</keyword>
<keyword id="KW-0378">Hydrolase</keyword>
<keyword id="KW-0460">Magnesium</keyword>
<keyword id="KW-0464">Manganese</keyword>
<keyword id="KW-0472">Membrane</keyword>
<keyword id="KW-0479">Metal-binding</keyword>
<keyword id="KW-0576">Peroxisome</keyword>
<keyword id="KW-1185">Reference proteome</keyword>
<keyword id="KW-0812">Transmembrane</keyword>
<keyword id="KW-1133">Transmembrane helix</keyword>
<feature type="chain" id="PRO_0000057142" description="Nudix hydrolase 11">
    <location>
        <begin position="1"/>
        <end position="222"/>
    </location>
</feature>
<feature type="transmembrane region" description="Helical" evidence="2">
    <location>
        <begin position="186"/>
        <end position="204"/>
    </location>
</feature>
<feature type="domain" description="Nudix hydrolase" evidence="3">
    <location>
        <begin position="31"/>
        <end position="175"/>
    </location>
</feature>
<feature type="short sequence motif" description="Nudix box">
    <location>
        <begin position="73"/>
        <end position="96"/>
    </location>
</feature>
<feature type="binding site" evidence="1">
    <location>
        <position position="90"/>
    </location>
    <ligand>
        <name>Mg(2+)</name>
        <dbReference type="ChEBI" id="CHEBI:18420"/>
    </ligand>
</feature>
<feature type="binding site" evidence="1">
    <location>
        <position position="94"/>
    </location>
    <ligand>
        <name>Mg(2+)</name>
        <dbReference type="ChEBI" id="CHEBI:18420"/>
    </ligand>
</feature>
<feature type="splice variant" id="VSP_037558" description="In isoform 2." evidence="6">
    <original>DRNRRAEER</original>
    <variation>KQASRGTRA</variation>
    <location>
        <begin position="155"/>
        <end position="163"/>
    </location>
</feature>
<feature type="splice variant" id="VSP_037559" description="In isoform 2." evidence="6">
    <location>
        <begin position="164"/>
        <end position="222"/>
    </location>
</feature>
<feature type="sequence conflict" description="In Ref. 3." evidence="6" ref="3">
    <original>K</original>
    <variation>I</variation>
    <location>
        <position position="48"/>
    </location>
</feature>
<feature type="sequence conflict" description="In Ref. 3." evidence="6" ref="3">
    <original>E</original>
    <variation>Q</variation>
    <location>
        <position position="50"/>
    </location>
</feature>
<feature type="sequence conflict" description="In Ref. 3; AAM62482." evidence="6" ref="3">
    <original>T</original>
    <variation>S</variation>
    <location>
        <position position="60"/>
    </location>
</feature>
<feature type="sequence conflict" description="In Ref. 3; AAM62482." evidence="6" ref="3">
    <original>Q</original>
    <variation>P</variation>
    <location>
        <position position="134"/>
    </location>
</feature>
<feature type="sequence conflict" description="In Ref. 3; AAM62482." evidence="6" ref="3">
    <original>W</original>
    <variation>L</variation>
    <location>
        <position position="218"/>
    </location>
</feature>
<protein>
    <recommendedName>
        <fullName>Nudix hydrolase 11</fullName>
        <shortName>AtNUDT11</shortName>
        <ecNumber>3.6.1.-</ecNumber>
    </recommendedName>
    <alternativeName>
        <fullName>Coenzyme A diphosphatase NUDT11</fullName>
    </alternativeName>
</protein>
<name>NUD11_ARATH</name>
<reference key="1">
    <citation type="journal article" date="1998" name="DNA Res.">
        <title>Structural analysis of Arabidopsis thaliana chromosome 5. VIII. Sequence features of the regions of 1,081,958 bp covered by seventeen physically assigned P1 and TAC clones.</title>
        <authorList>
            <person name="Asamizu E."/>
            <person name="Sato S."/>
            <person name="Kaneko T."/>
            <person name="Nakamura Y."/>
            <person name="Kotani H."/>
            <person name="Miyajima N."/>
            <person name="Tabata S."/>
        </authorList>
    </citation>
    <scope>NUCLEOTIDE SEQUENCE [LARGE SCALE GENOMIC DNA]</scope>
    <source>
        <strain>cv. Columbia</strain>
    </source>
</reference>
<reference key="2">
    <citation type="journal article" date="2017" name="Plant J.">
        <title>Araport11: a complete reannotation of the Arabidopsis thaliana reference genome.</title>
        <authorList>
            <person name="Cheng C.Y."/>
            <person name="Krishnakumar V."/>
            <person name="Chan A.P."/>
            <person name="Thibaud-Nissen F."/>
            <person name="Schobel S."/>
            <person name="Town C.D."/>
        </authorList>
    </citation>
    <scope>GENOME REANNOTATION</scope>
    <source>
        <strain>cv. Columbia</strain>
    </source>
</reference>
<reference key="3">
    <citation type="submission" date="2002-03" db="EMBL/GenBank/DDBJ databases">
        <title>Full-length cDNA from Arabidopsis thaliana.</title>
        <authorList>
            <person name="Brover V.V."/>
            <person name="Troukhan M.E."/>
            <person name="Alexandrov N.A."/>
            <person name="Lu Y.-P."/>
            <person name="Flavell R.B."/>
            <person name="Feldmann K.A."/>
        </authorList>
    </citation>
    <scope>NUCLEOTIDE SEQUENCE [LARGE SCALE MRNA]</scope>
</reference>
<reference key="4">
    <citation type="journal article" date="2005" name="J. Biol. Chem.">
        <title>Comprehensive analysis of cytosolic nudix hydrolases in Arabidopsis thaliana.</title>
        <authorList>
            <person name="Ogawa T."/>
            <person name="Ueda Y."/>
            <person name="Yoshimura K."/>
            <person name="Shigeoka S."/>
        </authorList>
    </citation>
    <scope>FUNCTION IN VITRO</scope>
    <scope>TISSUE SPECIFICITY</scope>
</reference>
<reference key="5">
    <citation type="journal article" date="2008" name="Plant Physiol.">
        <title>Molecular characterization of organelle-type Nudix hydrolases in Arabidopsis.</title>
        <authorList>
            <person name="Ogawa T."/>
            <person name="Yoshimura K."/>
            <person name="Miyake H."/>
            <person name="Ishikawa K."/>
            <person name="Ito D."/>
            <person name="Tanabe N."/>
            <person name="Shigeoka S."/>
        </authorList>
    </citation>
    <scope>BIOPHYSICOCHEMICAL PROPERTIES</scope>
</reference>
<accession>Q8LET2</accession>
<accession>B3H699</accession>
<accession>Q9FJ42</accession>
<gene>
    <name type="primary">NUDT11</name>
    <name type="synonym">NUDX11</name>
    <name type="ordered locus">At5g45940</name>
    <name type="ORF">K15I22.14</name>
</gene>
<organism>
    <name type="scientific">Arabidopsis thaliana</name>
    <name type="common">Mouse-ear cress</name>
    <dbReference type="NCBI Taxonomy" id="3702"/>
    <lineage>
        <taxon>Eukaryota</taxon>
        <taxon>Viridiplantae</taxon>
        <taxon>Streptophyta</taxon>
        <taxon>Embryophyta</taxon>
        <taxon>Tracheophyta</taxon>
        <taxon>Spermatophyta</taxon>
        <taxon>Magnoliopsida</taxon>
        <taxon>eudicotyledons</taxon>
        <taxon>Gunneridae</taxon>
        <taxon>Pentapetalae</taxon>
        <taxon>rosids</taxon>
        <taxon>malvids</taxon>
        <taxon>Brassicales</taxon>
        <taxon>Brassicaceae</taxon>
        <taxon>Camelineae</taxon>
        <taxon>Arabidopsis</taxon>
    </lineage>
</organism>
<evidence type="ECO:0000250" key="1"/>
<evidence type="ECO:0000255" key="2"/>
<evidence type="ECO:0000255" key="3">
    <source>
        <dbReference type="PROSITE-ProRule" id="PRU00794"/>
    </source>
</evidence>
<evidence type="ECO:0000269" key="4">
    <source>
    </source>
</evidence>
<evidence type="ECO:0000269" key="5">
    <source>
    </source>
</evidence>
<evidence type="ECO:0000305" key="6"/>
<dbReference type="EC" id="3.6.1.-"/>
<dbReference type="EMBL" id="AB016870">
    <property type="protein sequence ID" value="BAB09322.1"/>
    <property type="molecule type" value="Genomic_DNA"/>
</dbReference>
<dbReference type="EMBL" id="CP002688">
    <property type="protein sequence ID" value="AED95317.1"/>
    <property type="molecule type" value="Genomic_DNA"/>
</dbReference>
<dbReference type="EMBL" id="CP002688">
    <property type="protein sequence ID" value="AED95318.1"/>
    <property type="molecule type" value="Genomic_DNA"/>
</dbReference>
<dbReference type="EMBL" id="AY085250">
    <property type="protein sequence ID" value="AAM62482.1"/>
    <property type="molecule type" value="mRNA"/>
</dbReference>
<dbReference type="RefSeq" id="NP_001119380.1">
    <molecule id="Q8LET2-2"/>
    <property type="nucleotide sequence ID" value="NM_001125908.1"/>
</dbReference>
<dbReference type="RefSeq" id="NP_199406.1">
    <molecule id="Q8LET2-1"/>
    <property type="nucleotide sequence ID" value="NM_123962.3"/>
</dbReference>
<dbReference type="SMR" id="Q8LET2"/>
<dbReference type="FunCoup" id="Q8LET2">
    <property type="interactions" value="715"/>
</dbReference>
<dbReference type="STRING" id="3702.Q8LET2"/>
<dbReference type="PaxDb" id="3702-AT5G45940.1"/>
<dbReference type="ProteomicsDB" id="250583">
    <molecule id="Q8LET2-1"/>
</dbReference>
<dbReference type="EnsemblPlants" id="AT5G45940.1">
    <molecule id="Q8LET2-1"/>
    <property type="protein sequence ID" value="AT5G45940.1"/>
    <property type="gene ID" value="AT5G45940"/>
</dbReference>
<dbReference type="EnsemblPlants" id="AT5G45940.2">
    <molecule id="Q8LET2-2"/>
    <property type="protein sequence ID" value="AT5G45940.2"/>
    <property type="gene ID" value="AT5G45940"/>
</dbReference>
<dbReference type="GeneID" id="834634"/>
<dbReference type="Gramene" id="AT5G45940.1">
    <molecule id="Q8LET2-1"/>
    <property type="protein sequence ID" value="AT5G45940.1"/>
    <property type="gene ID" value="AT5G45940"/>
</dbReference>
<dbReference type="Gramene" id="AT5G45940.2">
    <molecule id="Q8LET2-2"/>
    <property type="protein sequence ID" value="AT5G45940.2"/>
    <property type="gene ID" value="AT5G45940"/>
</dbReference>
<dbReference type="KEGG" id="ath:AT5G45940"/>
<dbReference type="Araport" id="AT5G45940"/>
<dbReference type="TAIR" id="AT5G45940">
    <property type="gene designation" value="NUDT11"/>
</dbReference>
<dbReference type="eggNOG" id="KOG3069">
    <property type="taxonomic scope" value="Eukaryota"/>
</dbReference>
<dbReference type="HOGENOM" id="CLU_040940_8_0_1"/>
<dbReference type="InParanoid" id="Q8LET2"/>
<dbReference type="OMA" id="ESRSAYC"/>
<dbReference type="PhylomeDB" id="Q8LET2"/>
<dbReference type="BioCyc" id="ARA:AT5G45940-MONOMER"/>
<dbReference type="SABIO-RK" id="Q8LET2"/>
<dbReference type="PRO" id="PR:Q8LET2"/>
<dbReference type="Proteomes" id="UP000006548">
    <property type="component" value="Chromosome 5"/>
</dbReference>
<dbReference type="ExpressionAtlas" id="Q8LET2">
    <property type="expression patterns" value="baseline and differential"/>
</dbReference>
<dbReference type="GO" id="GO:0005829">
    <property type="term" value="C:cytosol"/>
    <property type="evidence" value="ECO:0000314"/>
    <property type="project" value="TAIR"/>
</dbReference>
<dbReference type="GO" id="GO:0005778">
    <property type="term" value="C:peroxisomal membrane"/>
    <property type="evidence" value="ECO:0007669"/>
    <property type="project" value="UniProtKB-SubCell"/>
</dbReference>
<dbReference type="GO" id="GO:0010945">
    <property type="term" value="F:coenzyme A diphosphatase activity"/>
    <property type="evidence" value="ECO:0000314"/>
    <property type="project" value="TAIR"/>
</dbReference>
<dbReference type="GO" id="GO:0008893">
    <property type="term" value="F:guanosine-3',5'-bis(diphosphate) 3'-diphosphatase activity"/>
    <property type="evidence" value="ECO:0000314"/>
    <property type="project" value="TAIR"/>
</dbReference>
<dbReference type="GO" id="GO:0046872">
    <property type="term" value="F:metal ion binding"/>
    <property type="evidence" value="ECO:0007669"/>
    <property type="project" value="UniProtKB-KW"/>
</dbReference>
<dbReference type="GO" id="GO:0000210">
    <property type="term" value="F:NAD+ diphosphatase activity"/>
    <property type="evidence" value="ECO:0000314"/>
    <property type="project" value="TAIR"/>
</dbReference>
<dbReference type="GO" id="GO:0015937">
    <property type="term" value="P:coenzyme A biosynthetic process"/>
    <property type="evidence" value="ECO:0000314"/>
    <property type="project" value="TAIR"/>
</dbReference>
<dbReference type="GO" id="GO:2001294">
    <property type="term" value="P:malonyl-CoA catabolic process"/>
    <property type="evidence" value="ECO:0000314"/>
    <property type="project" value="TAIR"/>
</dbReference>
<dbReference type="GO" id="GO:0006753">
    <property type="term" value="P:nucleoside phosphate metabolic process"/>
    <property type="evidence" value="ECO:0000314"/>
    <property type="project" value="TAIR"/>
</dbReference>
<dbReference type="CDD" id="cd03426">
    <property type="entry name" value="NUDIX_CoAse_Nudt7"/>
    <property type="match status" value="1"/>
</dbReference>
<dbReference type="FunFam" id="3.90.79.10:FF:000036">
    <property type="entry name" value="Nudix hydrolase 11"/>
    <property type="match status" value="1"/>
</dbReference>
<dbReference type="Gene3D" id="3.90.79.10">
    <property type="entry name" value="Nucleoside Triphosphate Pyrophosphohydrolase"/>
    <property type="match status" value="1"/>
</dbReference>
<dbReference type="InterPro" id="IPR045121">
    <property type="entry name" value="CoAse"/>
</dbReference>
<dbReference type="InterPro" id="IPR015797">
    <property type="entry name" value="NUDIX_hydrolase-like_dom_sf"/>
</dbReference>
<dbReference type="InterPro" id="IPR000086">
    <property type="entry name" value="NUDIX_hydrolase_dom"/>
</dbReference>
<dbReference type="PANTHER" id="PTHR12992">
    <property type="entry name" value="NUDIX HYDROLASE"/>
    <property type="match status" value="1"/>
</dbReference>
<dbReference type="PANTHER" id="PTHR12992:SF41">
    <property type="entry name" value="NUDIX HYDROLASE 11"/>
    <property type="match status" value="1"/>
</dbReference>
<dbReference type="Pfam" id="PF00293">
    <property type="entry name" value="NUDIX"/>
    <property type="match status" value="1"/>
</dbReference>
<dbReference type="SUPFAM" id="SSF55811">
    <property type="entry name" value="Nudix"/>
    <property type="match status" value="1"/>
</dbReference>
<dbReference type="PROSITE" id="PS51462">
    <property type="entry name" value="NUDIX"/>
    <property type="match status" value="1"/>
</dbReference>
<comment type="function">
    <text evidence="4">Coenzyme A diphosphatase which mediates the cleavage of CoA into 3',5'-ADP from CoA and 4'-phosphopantetheine. Can use malonyl-CoA, hexanoyl-CoA, lauroyl-CoA, myristoyl-CoA and palmitoyl-CoA as substrates, but not isobutyryl-CoA or propionyl-CoA.</text>
</comment>
<comment type="cofactor">
    <cofactor evidence="1">
        <name>Mn(2+)</name>
        <dbReference type="ChEBI" id="CHEBI:29035"/>
    </cofactor>
    <cofactor evidence="1">
        <name>Mg(2+)</name>
        <dbReference type="ChEBI" id="CHEBI:18420"/>
    </cofactor>
</comment>
<comment type="biophysicochemical properties">
    <kinetics>
        <KM evidence="5">27.8 uM for CoA</KM>
        <Vmax evidence="5">0.4 umol/min/mg enzyme with CoA as substrate</Vmax>
    </kinetics>
</comment>
<comment type="subcellular location">
    <subcellularLocation>
        <location evidence="6">Peroxisome membrane</location>
        <topology evidence="6">Single-pass membrane protein</topology>
    </subcellularLocation>
</comment>
<comment type="alternative products">
    <event type="alternative splicing"/>
    <isoform>
        <id>Q8LET2-1</id>
        <name>1</name>
        <sequence type="displayed"/>
    </isoform>
    <isoform>
        <id>Q8LET2-2</id>
        <name>2</name>
        <sequence type="described" ref="VSP_037558 VSP_037559"/>
    </isoform>
</comment>
<comment type="tissue specificity">
    <text evidence="4">Expressed in roots, stems and leaves.</text>
</comment>
<comment type="similarity">
    <text evidence="6">Belongs to the Nudix hydrolase family. PCD1 subfamily.</text>
</comment>
<sequence length="222" mass="25679">MSSTTTDSTELQNLIKLFQNCQTHPRQHFPAKSSAVLVCLYQEQREDKNELRVILTKRSTTLSSHPGEVALPGGKRDQEDKDDIATALREAREEIGLDPSLVTIISVLEPFVNKKGMSVAPVIGFLHDKKAFKQLPNPAEVEEIFDVPLEMFLKDRNRRAEEREHEGERYLLQYFDYYSEDKERSFIIWALTAGILIRVASIVYQRLPEFQERKPSFWNQPN</sequence>